<comment type="function">
    <text evidence="1">NDH-1 shuttles electrons from NADH, via FMN and iron-sulfur (Fe-S) centers, to quinones in the respiratory chain. The immediate electron acceptor for the enzyme in this species is believed to be a menaquinone. Couples the redox reaction to proton translocation (for every two electrons transferred, four hydrogen ions are translocated across the cytoplasmic membrane), and thus conserves the redox energy in a proton gradient.</text>
</comment>
<comment type="catalytic activity">
    <reaction evidence="1">
        <text>a quinone + NADH + 5 H(+)(in) = a quinol + NAD(+) + 4 H(+)(out)</text>
        <dbReference type="Rhea" id="RHEA:57888"/>
        <dbReference type="ChEBI" id="CHEBI:15378"/>
        <dbReference type="ChEBI" id="CHEBI:24646"/>
        <dbReference type="ChEBI" id="CHEBI:57540"/>
        <dbReference type="ChEBI" id="CHEBI:57945"/>
        <dbReference type="ChEBI" id="CHEBI:132124"/>
    </reaction>
</comment>
<comment type="cofactor">
    <cofactor evidence="1">
        <name>[4Fe-4S] cluster</name>
        <dbReference type="ChEBI" id="CHEBI:49883"/>
    </cofactor>
    <text evidence="1">Binds 1 [4Fe-4S] cluster.</text>
</comment>
<comment type="subunit">
    <text evidence="1">NDH-1 is composed of 14 different subunits. Subunits NuoB, C, D, E, F, and G constitute the peripheral sector of the complex.</text>
</comment>
<comment type="subcellular location">
    <subcellularLocation>
        <location evidence="1">Cell membrane</location>
        <topology evidence="1">Peripheral membrane protein</topology>
        <orientation evidence="1">Cytoplasmic side</orientation>
    </subcellularLocation>
</comment>
<comment type="similarity">
    <text evidence="1">Belongs to the complex I 20 kDa subunit family.</text>
</comment>
<comment type="sequence caution" evidence="2">
    <conflict type="erroneous initiation">
        <sequence resource="EMBL-CDS" id="ACP21064"/>
    </conflict>
</comment>
<sequence>MDTISNKTGEGGVIMVALEDLLNWAERSSLWPITFGLACCAIEMMGAYASHYDLDRLGVIPRNSPRQADVMIVSGTVTFKMADSIRRLYDQMPEPRYVISMGSCANCGGPYWQHGYHVVKGVDRIIPVDVYVPGCPPRPEALIGGILKLQEKIKAKLTYS</sequence>
<proteinExistence type="inferred from homology"/>
<evidence type="ECO:0000255" key="1">
    <source>
        <dbReference type="HAMAP-Rule" id="MF_01356"/>
    </source>
</evidence>
<evidence type="ECO:0000305" key="2"/>
<keyword id="KW-0004">4Fe-4S</keyword>
<keyword id="KW-1003">Cell membrane</keyword>
<keyword id="KW-0408">Iron</keyword>
<keyword id="KW-0411">Iron-sulfur</keyword>
<keyword id="KW-0472">Membrane</keyword>
<keyword id="KW-0479">Metal-binding</keyword>
<keyword id="KW-0520">NAD</keyword>
<keyword id="KW-0874">Quinone</keyword>
<keyword id="KW-1185">Reference proteome</keyword>
<keyword id="KW-1278">Translocase</keyword>
<keyword id="KW-0813">Transport</keyword>
<feature type="chain" id="PRO_0000376117" description="NADH-quinone oxidoreductase subunit B">
    <location>
        <begin position="1"/>
        <end position="160"/>
    </location>
</feature>
<feature type="binding site" evidence="1">
    <location>
        <position position="39"/>
    </location>
    <ligand>
        <name>[4Fe-4S] cluster</name>
        <dbReference type="ChEBI" id="CHEBI:49883"/>
    </ligand>
</feature>
<feature type="binding site" evidence="1">
    <location>
        <position position="40"/>
    </location>
    <ligand>
        <name>[4Fe-4S] cluster</name>
        <dbReference type="ChEBI" id="CHEBI:49883"/>
    </ligand>
</feature>
<feature type="binding site" evidence="1">
    <location>
        <position position="104"/>
    </location>
    <ligand>
        <name>[4Fe-4S] cluster</name>
        <dbReference type="ChEBI" id="CHEBI:49883"/>
    </ligand>
</feature>
<feature type="binding site" evidence="1">
    <location>
        <position position="135"/>
    </location>
    <ligand>
        <name>[4Fe-4S] cluster</name>
        <dbReference type="ChEBI" id="CHEBI:49883"/>
    </ligand>
</feature>
<dbReference type="EC" id="7.1.1.-" evidence="1"/>
<dbReference type="EMBL" id="CP001102">
    <property type="protein sequence ID" value="ACP21064.1"/>
    <property type="status" value="ALT_INIT"/>
    <property type="molecule type" value="Genomic_DNA"/>
</dbReference>
<dbReference type="RefSeq" id="WP_148204971.1">
    <property type="nucleotide sequence ID" value="NC_010830.1"/>
</dbReference>
<dbReference type="SMR" id="B3ET80"/>
<dbReference type="STRING" id="452471.Aasi_1809"/>
<dbReference type="KEGG" id="aas:Aasi_1809"/>
<dbReference type="eggNOG" id="COG0377">
    <property type="taxonomic scope" value="Bacteria"/>
</dbReference>
<dbReference type="HOGENOM" id="CLU_055737_7_3_10"/>
<dbReference type="OrthoDB" id="9786737at2"/>
<dbReference type="Proteomes" id="UP000001227">
    <property type="component" value="Chromosome"/>
</dbReference>
<dbReference type="GO" id="GO:0005886">
    <property type="term" value="C:plasma membrane"/>
    <property type="evidence" value="ECO:0007669"/>
    <property type="project" value="UniProtKB-SubCell"/>
</dbReference>
<dbReference type="GO" id="GO:0045271">
    <property type="term" value="C:respiratory chain complex I"/>
    <property type="evidence" value="ECO:0007669"/>
    <property type="project" value="TreeGrafter"/>
</dbReference>
<dbReference type="GO" id="GO:0051539">
    <property type="term" value="F:4 iron, 4 sulfur cluster binding"/>
    <property type="evidence" value="ECO:0007669"/>
    <property type="project" value="UniProtKB-KW"/>
</dbReference>
<dbReference type="GO" id="GO:0005506">
    <property type="term" value="F:iron ion binding"/>
    <property type="evidence" value="ECO:0007669"/>
    <property type="project" value="UniProtKB-UniRule"/>
</dbReference>
<dbReference type="GO" id="GO:0008137">
    <property type="term" value="F:NADH dehydrogenase (ubiquinone) activity"/>
    <property type="evidence" value="ECO:0007669"/>
    <property type="project" value="InterPro"/>
</dbReference>
<dbReference type="GO" id="GO:0050136">
    <property type="term" value="F:NADH:ubiquinone reductase (non-electrogenic) activity"/>
    <property type="evidence" value="ECO:0007669"/>
    <property type="project" value="UniProtKB-UniRule"/>
</dbReference>
<dbReference type="GO" id="GO:0048038">
    <property type="term" value="F:quinone binding"/>
    <property type="evidence" value="ECO:0007669"/>
    <property type="project" value="UniProtKB-KW"/>
</dbReference>
<dbReference type="GO" id="GO:0009060">
    <property type="term" value="P:aerobic respiration"/>
    <property type="evidence" value="ECO:0007669"/>
    <property type="project" value="TreeGrafter"/>
</dbReference>
<dbReference type="GO" id="GO:0015990">
    <property type="term" value="P:electron transport coupled proton transport"/>
    <property type="evidence" value="ECO:0007669"/>
    <property type="project" value="TreeGrafter"/>
</dbReference>
<dbReference type="FunFam" id="3.40.50.12280:FF:000002">
    <property type="entry name" value="NADH-quinone oxidoreductase subunit B"/>
    <property type="match status" value="1"/>
</dbReference>
<dbReference type="Gene3D" id="3.40.50.12280">
    <property type="match status" value="1"/>
</dbReference>
<dbReference type="HAMAP" id="MF_01356">
    <property type="entry name" value="NDH1_NuoB"/>
    <property type="match status" value="1"/>
</dbReference>
<dbReference type="InterPro" id="IPR006137">
    <property type="entry name" value="NADH_UbQ_OxRdtase-like_20kDa"/>
</dbReference>
<dbReference type="InterPro" id="IPR006138">
    <property type="entry name" value="NADH_UQ_OxRdtase_20Kd_su"/>
</dbReference>
<dbReference type="NCBIfam" id="TIGR01957">
    <property type="entry name" value="nuoB_fam"/>
    <property type="match status" value="1"/>
</dbReference>
<dbReference type="NCBIfam" id="NF005012">
    <property type="entry name" value="PRK06411.1"/>
    <property type="match status" value="1"/>
</dbReference>
<dbReference type="PANTHER" id="PTHR11995">
    <property type="entry name" value="NADH DEHYDROGENASE"/>
    <property type="match status" value="1"/>
</dbReference>
<dbReference type="PANTHER" id="PTHR11995:SF14">
    <property type="entry name" value="NADH DEHYDROGENASE [UBIQUINONE] IRON-SULFUR PROTEIN 7, MITOCHONDRIAL"/>
    <property type="match status" value="1"/>
</dbReference>
<dbReference type="Pfam" id="PF01058">
    <property type="entry name" value="Oxidored_q6"/>
    <property type="match status" value="1"/>
</dbReference>
<dbReference type="SUPFAM" id="SSF56770">
    <property type="entry name" value="HydA/Nqo6-like"/>
    <property type="match status" value="1"/>
</dbReference>
<dbReference type="PROSITE" id="PS01150">
    <property type="entry name" value="COMPLEX1_20K"/>
    <property type="match status" value="1"/>
</dbReference>
<accession>B3ET80</accession>
<accession>C3L423</accession>
<reference key="1">
    <citation type="journal article" date="2010" name="J. Bacteriol.">
        <title>The genome of the amoeba symbiont 'Candidatus Amoebophilus asiaticus' reveals common mechanisms for host cell interaction among amoeba-associated bacteria.</title>
        <authorList>
            <person name="Schmitz-Esser S."/>
            <person name="Tischler P."/>
            <person name="Arnold R."/>
            <person name="Montanaro J."/>
            <person name="Wagner M."/>
            <person name="Rattei T."/>
            <person name="Horn M."/>
        </authorList>
    </citation>
    <scope>NUCLEOTIDE SEQUENCE [LARGE SCALE GENOMIC DNA]</scope>
    <source>
        <strain>5a2</strain>
    </source>
</reference>
<protein>
    <recommendedName>
        <fullName evidence="1">NADH-quinone oxidoreductase subunit B</fullName>
        <ecNumber evidence="1">7.1.1.-</ecNumber>
    </recommendedName>
    <alternativeName>
        <fullName evidence="1">NADH dehydrogenase I subunit B</fullName>
    </alternativeName>
    <alternativeName>
        <fullName evidence="1">NDH-1 subunit B</fullName>
    </alternativeName>
</protein>
<name>NUOB_AMOA5</name>
<gene>
    <name evidence="1" type="primary">nuoB</name>
    <name type="ordered locus">Aasi_1088</name>
    <name type="ORF">Aasi_1809</name>
</gene>
<organism>
    <name type="scientific">Amoebophilus asiaticus (strain 5a2)</name>
    <dbReference type="NCBI Taxonomy" id="452471"/>
    <lineage>
        <taxon>Bacteria</taxon>
        <taxon>Pseudomonadati</taxon>
        <taxon>Bacteroidota</taxon>
        <taxon>Cytophagia</taxon>
        <taxon>Cytophagales</taxon>
        <taxon>Amoebophilaceae</taxon>
        <taxon>Candidatus Amoebophilus</taxon>
    </lineage>
</organism>